<comment type="function">
    <text evidence="1">Nucleoside triphosphate pyrophosphatase that hydrolyzes dTTP and UTP. May have a dual role in cell division arrest and in preventing the incorporation of modified nucleotides into cellular nucleic acids.</text>
</comment>
<comment type="catalytic activity">
    <reaction evidence="1">
        <text>dTTP + H2O = dTMP + diphosphate + H(+)</text>
        <dbReference type="Rhea" id="RHEA:28534"/>
        <dbReference type="ChEBI" id="CHEBI:15377"/>
        <dbReference type="ChEBI" id="CHEBI:15378"/>
        <dbReference type="ChEBI" id="CHEBI:33019"/>
        <dbReference type="ChEBI" id="CHEBI:37568"/>
        <dbReference type="ChEBI" id="CHEBI:63528"/>
        <dbReference type="EC" id="3.6.1.9"/>
    </reaction>
</comment>
<comment type="catalytic activity">
    <reaction evidence="1">
        <text>UTP + H2O = UMP + diphosphate + H(+)</text>
        <dbReference type="Rhea" id="RHEA:29395"/>
        <dbReference type="ChEBI" id="CHEBI:15377"/>
        <dbReference type="ChEBI" id="CHEBI:15378"/>
        <dbReference type="ChEBI" id="CHEBI:33019"/>
        <dbReference type="ChEBI" id="CHEBI:46398"/>
        <dbReference type="ChEBI" id="CHEBI:57865"/>
        <dbReference type="EC" id="3.6.1.9"/>
    </reaction>
</comment>
<comment type="cofactor">
    <cofactor evidence="1">
        <name>a divalent metal cation</name>
        <dbReference type="ChEBI" id="CHEBI:60240"/>
    </cofactor>
</comment>
<comment type="subcellular location">
    <subcellularLocation>
        <location evidence="1">Cytoplasm</location>
    </subcellularLocation>
</comment>
<comment type="similarity">
    <text evidence="1">Belongs to the Maf family. YhdE subfamily.</text>
</comment>
<sequence length="196" mass="21977">MEARLVLGSSSERRKAVLESFRIPFICVSPDFDERSIVYSGDPFKYTKELAWNKANVVRSQGFSDALIITADTVVVYKGEVFNKPESEEHAVEMLRTLSGSSHSVITTLVLMQNEKVLSASENTQVSFIDIPPQHLKTYVRSFSSLKRCGGYCVQDGGGLIIKQIEGCVYNIQGLPIKTLNQLLMEFNISLWDYLV</sequence>
<organism>
    <name type="scientific">Chlamydia trachomatis serovar L2b (strain UCH-1/proctitis)</name>
    <dbReference type="NCBI Taxonomy" id="471473"/>
    <lineage>
        <taxon>Bacteria</taxon>
        <taxon>Pseudomonadati</taxon>
        <taxon>Chlamydiota</taxon>
        <taxon>Chlamydiia</taxon>
        <taxon>Chlamydiales</taxon>
        <taxon>Chlamydiaceae</taxon>
        <taxon>Chlamydia/Chlamydophila group</taxon>
        <taxon>Chlamydia</taxon>
    </lineage>
</organism>
<protein>
    <recommendedName>
        <fullName evidence="1">dTTP/UTP pyrophosphatase</fullName>
        <shortName evidence="1">dTTPase/UTPase</shortName>
        <ecNumber evidence="1">3.6.1.9</ecNumber>
    </recommendedName>
    <alternativeName>
        <fullName evidence="1">Nucleoside triphosphate pyrophosphatase</fullName>
    </alternativeName>
    <alternativeName>
        <fullName evidence="1">Nucleotide pyrophosphatase</fullName>
        <shortName evidence="1">Nucleotide PPase</shortName>
    </alternativeName>
</protein>
<gene>
    <name type="ordered locus">CTLon_0601</name>
</gene>
<reference key="1">
    <citation type="journal article" date="2008" name="Genome Res.">
        <title>Chlamydia trachomatis: genome sequence analysis of lymphogranuloma venereum isolates.</title>
        <authorList>
            <person name="Thomson N.R."/>
            <person name="Holden M.T.G."/>
            <person name="Carder C."/>
            <person name="Lennard N."/>
            <person name="Lockey S.J."/>
            <person name="Marsh P."/>
            <person name="Skipp P."/>
            <person name="O'Connor C.D."/>
            <person name="Goodhead I."/>
            <person name="Norbertzcak H."/>
            <person name="Harris B."/>
            <person name="Ormond D."/>
            <person name="Rance R."/>
            <person name="Quail M.A."/>
            <person name="Parkhill J."/>
            <person name="Stephens R.S."/>
            <person name="Clarke I.N."/>
        </authorList>
    </citation>
    <scope>NUCLEOTIDE SEQUENCE [LARGE SCALE GENOMIC DNA]</scope>
    <source>
        <strain>UCH-1/proctitis</strain>
    </source>
</reference>
<accession>B0BBY3</accession>
<feature type="chain" id="PRO_1000127776" description="dTTP/UTP pyrophosphatase">
    <location>
        <begin position="1"/>
        <end position="196"/>
    </location>
</feature>
<feature type="active site" description="Proton acceptor" evidence="1">
    <location>
        <position position="72"/>
    </location>
</feature>
<feature type="site" description="Important for substrate specificity" evidence="1">
    <location>
        <position position="13"/>
    </location>
</feature>
<feature type="site" description="Important for substrate specificity" evidence="1">
    <location>
        <position position="73"/>
    </location>
</feature>
<feature type="site" description="Important for substrate specificity" evidence="1">
    <location>
        <position position="155"/>
    </location>
</feature>
<name>NTPPA_CHLTB</name>
<evidence type="ECO:0000255" key="1">
    <source>
        <dbReference type="HAMAP-Rule" id="MF_00528"/>
    </source>
</evidence>
<proteinExistence type="inferred from homology"/>
<keyword id="KW-0963">Cytoplasm</keyword>
<keyword id="KW-0378">Hydrolase</keyword>
<keyword id="KW-0546">Nucleotide metabolism</keyword>
<dbReference type="EC" id="3.6.1.9" evidence="1"/>
<dbReference type="EMBL" id="AM884177">
    <property type="protein sequence ID" value="CAP06998.1"/>
    <property type="molecule type" value="Genomic_DNA"/>
</dbReference>
<dbReference type="RefSeq" id="WP_009873746.1">
    <property type="nucleotide sequence ID" value="NC_010280.2"/>
</dbReference>
<dbReference type="SMR" id="B0BBY3"/>
<dbReference type="KEGG" id="ctl:CTLon_0601"/>
<dbReference type="HOGENOM" id="CLU_040416_0_0_0"/>
<dbReference type="Proteomes" id="UP001154401">
    <property type="component" value="Chromosome"/>
</dbReference>
<dbReference type="GO" id="GO:0005737">
    <property type="term" value="C:cytoplasm"/>
    <property type="evidence" value="ECO:0007669"/>
    <property type="project" value="UniProtKB-SubCell"/>
</dbReference>
<dbReference type="GO" id="GO:0036218">
    <property type="term" value="F:dTTP diphosphatase activity"/>
    <property type="evidence" value="ECO:0007669"/>
    <property type="project" value="RHEA"/>
</dbReference>
<dbReference type="GO" id="GO:0036221">
    <property type="term" value="F:UTP diphosphatase activity"/>
    <property type="evidence" value="ECO:0007669"/>
    <property type="project" value="RHEA"/>
</dbReference>
<dbReference type="GO" id="GO:0009117">
    <property type="term" value="P:nucleotide metabolic process"/>
    <property type="evidence" value="ECO:0007669"/>
    <property type="project" value="UniProtKB-KW"/>
</dbReference>
<dbReference type="CDD" id="cd00555">
    <property type="entry name" value="Maf"/>
    <property type="match status" value="1"/>
</dbReference>
<dbReference type="FunFam" id="3.90.950.10:FF:000018">
    <property type="entry name" value="dTTP/UTP pyrophosphatase"/>
    <property type="match status" value="1"/>
</dbReference>
<dbReference type="Gene3D" id="3.90.950.10">
    <property type="match status" value="1"/>
</dbReference>
<dbReference type="HAMAP" id="MF_00528">
    <property type="entry name" value="Maf"/>
    <property type="match status" value="1"/>
</dbReference>
<dbReference type="InterPro" id="IPR029001">
    <property type="entry name" value="ITPase-like_fam"/>
</dbReference>
<dbReference type="InterPro" id="IPR003697">
    <property type="entry name" value="Maf-like"/>
</dbReference>
<dbReference type="NCBIfam" id="TIGR00172">
    <property type="entry name" value="maf"/>
    <property type="match status" value="1"/>
</dbReference>
<dbReference type="PANTHER" id="PTHR43213">
    <property type="entry name" value="BIFUNCTIONAL DTTP/UTP PYROPHOSPHATASE/METHYLTRANSFERASE PROTEIN-RELATED"/>
    <property type="match status" value="1"/>
</dbReference>
<dbReference type="PANTHER" id="PTHR43213:SF5">
    <property type="entry name" value="BIFUNCTIONAL DTTP_UTP PYROPHOSPHATASE_METHYLTRANSFERASE PROTEIN-RELATED"/>
    <property type="match status" value="1"/>
</dbReference>
<dbReference type="Pfam" id="PF02545">
    <property type="entry name" value="Maf"/>
    <property type="match status" value="1"/>
</dbReference>
<dbReference type="PIRSF" id="PIRSF006305">
    <property type="entry name" value="Maf"/>
    <property type="match status" value="1"/>
</dbReference>
<dbReference type="SUPFAM" id="SSF52972">
    <property type="entry name" value="ITPase-like"/>
    <property type="match status" value="1"/>
</dbReference>